<comment type="function">
    <text evidence="1">Methyltransferase required for the conversion of demethylmenaquinol (DMKH2) to menaquinol (MKH2) and the conversion of 2-polyprenyl-6-methoxy-1,4-benzoquinol (DDMQH2) to 2-polyprenyl-3-methyl-6-methoxy-1,4-benzoquinol (DMQH2).</text>
</comment>
<comment type="catalytic activity">
    <reaction evidence="1">
        <text>a 2-demethylmenaquinol + S-adenosyl-L-methionine = a menaquinol + S-adenosyl-L-homocysteine + H(+)</text>
        <dbReference type="Rhea" id="RHEA:42640"/>
        <dbReference type="Rhea" id="RHEA-COMP:9539"/>
        <dbReference type="Rhea" id="RHEA-COMP:9563"/>
        <dbReference type="ChEBI" id="CHEBI:15378"/>
        <dbReference type="ChEBI" id="CHEBI:18151"/>
        <dbReference type="ChEBI" id="CHEBI:55437"/>
        <dbReference type="ChEBI" id="CHEBI:57856"/>
        <dbReference type="ChEBI" id="CHEBI:59789"/>
        <dbReference type="EC" id="2.1.1.163"/>
    </reaction>
</comment>
<comment type="catalytic activity">
    <reaction evidence="1">
        <text>a 2-methoxy-6-(all-trans-polyprenyl)benzene-1,4-diol + S-adenosyl-L-methionine = a 5-methoxy-2-methyl-3-(all-trans-polyprenyl)benzene-1,4-diol + S-adenosyl-L-homocysteine + H(+)</text>
        <dbReference type="Rhea" id="RHEA:28286"/>
        <dbReference type="Rhea" id="RHEA-COMP:10858"/>
        <dbReference type="Rhea" id="RHEA-COMP:10859"/>
        <dbReference type="ChEBI" id="CHEBI:15378"/>
        <dbReference type="ChEBI" id="CHEBI:57856"/>
        <dbReference type="ChEBI" id="CHEBI:59789"/>
        <dbReference type="ChEBI" id="CHEBI:84166"/>
        <dbReference type="ChEBI" id="CHEBI:84167"/>
        <dbReference type="EC" id="2.1.1.201"/>
    </reaction>
</comment>
<comment type="pathway">
    <text evidence="1">Quinol/quinone metabolism; menaquinone biosynthesis; menaquinol from 1,4-dihydroxy-2-naphthoate: step 2/2.</text>
</comment>
<comment type="pathway">
    <text evidence="1">Cofactor biosynthesis; ubiquinone biosynthesis.</text>
</comment>
<comment type="similarity">
    <text evidence="1">Belongs to the class I-like SAM-binding methyltransferase superfamily. MenG/UbiE family.</text>
</comment>
<feature type="chain" id="PRO_0000193311" description="Ubiquinone/menaquinone biosynthesis C-methyltransferase UbiE">
    <location>
        <begin position="1"/>
        <end position="256"/>
    </location>
</feature>
<feature type="region of interest" description="Disordered" evidence="2">
    <location>
        <begin position="1"/>
        <end position="23"/>
    </location>
</feature>
<feature type="compositionally biased region" description="Basic and acidic residues" evidence="2">
    <location>
        <begin position="1"/>
        <end position="12"/>
    </location>
</feature>
<feature type="binding site" evidence="1">
    <location>
        <position position="79"/>
    </location>
    <ligand>
        <name>S-adenosyl-L-methionine</name>
        <dbReference type="ChEBI" id="CHEBI:59789"/>
    </ligand>
</feature>
<feature type="binding site" evidence="1">
    <location>
        <position position="100"/>
    </location>
    <ligand>
        <name>S-adenosyl-L-methionine</name>
        <dbReference type="ChEBI" id="CHEBI:59789"/>
    </ligand>
</feature>
<feature type="binding site" evidence="1">
    <location>
        <begin position="128"/>
        <end position="129"/>
    </location>
    <ligand>
        <name>S-adenosyl-L-methionine</name>
        <dbReference type="ChEBI" id="CHEBI:59789"/>
    </ligand>
</feature>
<protein>
    <recommendedName>
        <fullName evidence="1">Ubiquinone/menaquinone biosynthesis C-methyltransferase UbiE</fullName>
        <ecNumber evidence="1">2.1.1.163</ecNumber>
        <ecNumber evidence="1">2.1.1.201</ecNumber>
    </recommendedName>
    <alternativeName>
        <fullName evidence="1">2-methoxy-6-polyprenyl-1,4-benzoquinol methylase</fullName>
    </alternativeName>
    <alternativeName>
        <fullName evidence="1">Demethylmenaquinone methyltransferase</fullName>
    </alternativeName>
</protein>
<proteinExistence type="inferred from homology"/>
<keyword id="KW-0474">Menaquinone biosynthesis</keyword>
<keyword id="KW-0489">Methyltransferase</keyword>
<keyword id="KW-1185">Reference proteome</keyword>
<keyword id="KW-0949">S-adenosyl-L-methionine</keyword>
<keyword id="KW-0808">Transferase</keyword>
<keyword id="KW-0831">Ubiquinone biosynthesis</keyword>
<dbReference type="EC" id="2.1.1.163" evidence="1"/>
<dbReference type="EC" id="2.1.1.201" evidence="1"/>
<dbReference type="EMBL" id="AE015451">
    <property type="protein sequence ID" value="AAN70577.1"/>
    <property type="molecule type" value="Genomic_DNA"/>
</dbReference>
<dbReference type="RefSeq" id="NP_747113.1">
    <property type="nucleotide sequence ID" value="NC_002947.4"/>
</dbReference>
<dbReference type="RefSeq" id="WP_004576729.1">
    <property type="nucleotide sequence ID" value="NZ_CP169744.1"/>
</dbReference>
<dbReference type="SMR" id="Q88D17"/>
<dbReference type="STRING" id="160488.PP_5011"/>
<dbReference type="PaxDb" id="160488-PP_5011"/>
<dbReference type="GeneID" id="83682745"/>
<dbReference type="KEGG" id="ppu:PP_5011"/>
<dbReference type="PATRIC" id="fig|160488.4.peg.5352"/>
<dbReference type="eggNOG" id="COG2226">
    <property type="taxonomic scope" value="Bacteria"/>
</dbReference>
<dbReference type="HOGENOM" id="CLU_037990_0_0_6"/>
<dbReference type="OrthoDB" id="9808140at2"/>
<dbReference type="PhylomeDB" id="Q88D17"/>
<dbReference type="BioCyc" id="PPUT160488:G1G01-5356-MONOMER"/>
<dbReference type="UniPathway" id="UPA00079">
    <property type="reaction ID" value="UER00169"/>
</dbReference>
<dbReference type="UniPathway" id="UPA00232"/>
<dbReference type="Proteomes" id="UP000000556">
    <property type="component" value="Chromosome"/>
</dbReference>
<dbReference type="GO" id="GO:0008425">
    <property type="term" value="F:2-methoxy-6-polyprenyl-1,4-benzoquinol methyltransferase activity"/>
    <property type="evidence" value="ECO:0007669"/>
    <property type="project" value="UniProtKB-UniRule"/>
</dbReference>
<dbReference type="GO" id="GO:0043770">
    <property type="term" value="F:demethylmenaquinone methyltransferase activity"/>
    <property type="evidence" value="ECO:0007669"/>
    <property type="project" value="UniProtKB-UniRule"/>
</dbReference>
<dbReference type="GO" id="GO:0009060">
    <property type="term" value="P:aerobic respiration"/>
    <property type="evidence" value="ECO:0007669"/>
    <property type="project" value="UniProtKB-UniRule"/>
</dbReference>
<dbReference type="GO" id="GO:0009234">
    <property type="term" value="P:menaquinone biosynthetic process"/>
    <property type="evidence" value="ECO:0007669"/>
    <property type="project" value="UniProtKB-UniRule"/>
</dbReference>
<dbReference type="GO" id="GO:0032259">
    <property type="term" value="P:methylation"/>
    <property type="evidence" value="ECO:0007669"/>
    <property type="project" value="UniProtKB-KW"/>
</dbReference>
<dbReference type="CDD" id="cd02440">
    <property type="entry name" value="AdoMet_MTases"/>
    <property type="match status" value="1"/>
</dbReference>
<dbReference type="FunFam" id="3.40.50.150:FF:000014">
    <property type="entry name" value="Ubiquinone/menaquinone biosynthesis C-methyltransferase UbiE"/>
    <property type="match status" value="1"/>
</dbReference>
<dbReference type="Gene3D" id="3.40.50.150">
    <property type="entry name" value="Vaccinia Virus protein VP39"/>
    <property type="match status" value="1"/>
</dbReference>
<dbReference type="HAMAP" id="MF_01813">
    <property type="entry name" value="MenG_UbiE_methyltr"/>
    <property type="match status" value="1"/>
</dbReference>
<dbReference type="InterPro" id="IPR029063">
    <property type="entry name" value="SAM-dependent_MTases_sf"/>
</dbReference>
<dbReference type="InterPro" id="IPR004033">
    <property type="entry name" value="UbiE/COQ5_MeTrFase"/>
</dbReference>
<dbReference type="InterPro" id="IPR023576">
    <property type="entry name" value="UbiE/COQ5_MeTrFase_CS"/>
</dbReference>
<dbReference type="NCBIfam" id="TIGR01934">
    <property type="entry name" value="MenG_MenH_UbiE"/>
    <property type="match status" value="1"/>
</dbReference>
<dbReference type="NCBIfam" id="NF001240">
    <property type="entry name" value="PRK00216.1-1"/>
    <property type="match status" value="1"/>
</dbReference>
<dbReference type="NCBIfam" id="NF001244">
    <property type="entry name" value="PRK00216.1-5"/>
    <property type="match status" value="1"/>
</dbReference>
<dbReference type="PANTHER" id="PTHR43591:SF24">
    <property type="entry name" value="2-METHOXY-6-POLYPRENYL-1,4-BENZOQUINOL METHYLASE, MITOCHONDRIAL"/>
    <property type="match status" value="1"/>
</dbReference>
<dbReference type="PANTHER" id="PTHR43591">
    <property type="entry name" value="METHYLTRANSFERASE"/>
    <property type="match status" value="1"/>
</dbReference>
<dbReference type="Pfam" id="PF01209">
    <property type="entry name" value="Ubie_methyltran"/>
    <property type="match status" value="1"/>
</dbReference>
<dbReference type="SUPFAM" id="SSF53335">
    <property type="entry name" value="S-adenosyl-L-methionine-dependent methyltransferases"/>
    <property type="match status" value="1"/>
</dbReference>
<dbReference type="PROSITE" id="PS51608">
    <property type="entry name" value="SAM_MT_UBIE"/>
    <property type="match status" value="1"/>
</dbReference>
<dbReference type="PROSITE" id="PS01183">
    <property type="entry name" value="UBIE_1"/>
    <property type="match status" value="1"/>
</dbReference>
<dbReference type="PROSITE" id="PS01184">
    <property type="entry name" value="UBIE_2"/>
    <property type="match status" value="1"/>
</dbReference>
<gene>
    <name evidence="1" type="primary">ubiE</name>
    <name type="ordered locus">PP_5011</name>
</gene>
<sequence length="256" mass="28398">MNDQRKGDHAEPTTHFGYQDVPESQKAKKVAEVFHSVAAKYDLMNDVLSGGMHRLWKRFTIELSGVRSGNRVLDIAGGTGDLAAKFSRLVGPTGQVVLADINDSMLKVGRDRLLDRGVAGNIEFVQADAEKLPFPDNHFDCVTIAFGLRNVTHKDAAIRSMLRVLKPGGRLLILEFSKPTNKLMSKAYDAYSFAFMPLAGKLITNDAESYRYLAESIRMHPDQETLKSMMVEAGFDRVTYHNMTSGIVAVHRGIKP</sequence>
<reference key="1">
    <citation type="journal article" date="2002" name="Environ. Microbiol.">
        <title>Complete genome sequence and comparative analysis of the metabolically versatile Pseudomonas putida KT2440.</title>
        <authorList>
            <person name="Nelson K.E."/>
            <person name="Weinel C."/>
            <person name="Paulsen I.T."/>
            <person name="Dodson R.J."/>
            <person name="Hilbert H."/>
            <person name="Martins dos Santos V.A.P."/>
            <person name="Fouts D.E."/>
            <person name="Gill S.R."/>
            <person name="Pop M."/>
            <person name="Holmes M."/>
            <person name="Brinkac L.M."/>
            <person name="Beanan M.J."/>
            <person name="DeBoy R.T."/>
            <person name="Daugherty S.C."/>
            <person name="Kolonay J.F."/>
            <person name="Madupu R."/>
            <person name="Nelson W.C."/>
            <person name="White O."/>
            <person name="Peterson J.D."/>
            <person name="Khouri H.M."/>
            <person name="Hance I."/>
            <person name="Chris Lee P."/>
            <person name="Holtzapple E.K."/>
            <person name="Scanlan D."/>
            <person name="Tran K."/>
            <person name="Moazzez A."/>
            <person name="Utterback T.R."/>
            <person name="Rizzo M."/>
            <person name="Lee K."/>
            <person name="Kosack D."/>
            <person name="Moestl D."/>
            <person name="Wedler H."/>
            <person name="Lauber J."/>
            <person name="Stjepandic D."/>
            <person name="Hoheisel J."/>
            <person name="Straetz M."/>
            <person name="Heim S."/>
            <person name="Kiewitz C."/>
            <person name="Eisen J.A."/>
            <person name="Timmis K.N."/>
            <person name="Duesterhoeft A."/>
            <person name="Tuemmler B."/>
            <person name="Fraser C.M."/>
        </authorList>
    </citation>
    <scope>NUCLEOTIDE SEQUENCE [LARGE SCALE GENOMIC DNA]</scope>
    <source>
        <strain>ATCC 47054 / DSM 6125 / CFBP 8728 / NCIMB 11950 / KT2440</strain>
    </source>
</reference>
<evidence type="ECO:0000255" key="1">
    <source>
        <dbReference type="HAMAP-Rule" id="MF_01813"/>
    </source>
</evidence>
<evidence type="ECO:0000256" key="2">
    <source>
        <dbReference type="SAM" id="MobiDB-lite"/>
    </source>
</evidence>
<name>UBIE_PSEPK</name>
<accession>Q88D17</accession>
<organism>
    <name type="scientific">Pseudomonas putida (strain ATCC 47054 / DSM 6125 / CFBP 8728 / NCIMB 11950 / KT2440)</name>
    <dbReference type="NCBI Taxonomy" id="160488"/>
    <lineage>
        <taxon>Bacteria</taxon>
        <taxon>Pseudomonadati</taxon>
        <taxon>Pseudomonadota</taxon>
        <taxon>Gammaproteobacteria</taxon>
        <taxon>Pseudomonadales</taxon>
        <taxon>Pseudomonadaceae</taxon>
        <taxon>Pseudomonas</taxon>
    </lineage>
</organism>